<proteinExistence type="evidence at transcript level"/>
<protein>
    <recommendedName>
        <fullName evidence="2">CST complex subunit STN1</fullName>
    </recommendedName>
    <alternativeName>
        <fullName>Oligonucleotide/oligosaccharide-binding fold-containing protein 1</fullName>
    </alternativeName>
    <alternativeName>
        <fullName>Suppressor of cdc thirteen homolog</fullName>
    </alternativeName>
</protein>
<comment type="function">
    <text evidence="2">Component of the CST complex proposed to act as a specialized replication factor promoting DNA replication under conditions of replication stress or natural replication barriers such as the telomere duplex. The CST complex binds single-stranded DNA with high affinity in a sequence-independent manner, while isolated subunits bind DNA with low affinity by themselves. Initially the CST complex has been proposed to protect telomeres from DNA degradation. However, the CST complex has been shown to be involved in several aspects of telomere replication.</text>
</comment>
<comment type="subunit">
    <text evidence="2">Component of the CST complex.</text>
</comment>
<comment type="subcellular location">
    <subcellularLocation>
        <location evidence="2">Nucleus</location>
    </subcellularLocation>
    <subcellularLocation>
        <location evidence="2">Chromosome</location>
        <location evidence="2">Telomere</location>
    </subcellularLocation>
</comment>
<comment type="disruption phenotype">
    <text evidence="3">Morpholino knockdown in embryos results in decreased red blood cells and an arrest in T-cell progenitors, as well as increased vascularity. The vascular defects could be rescued by wild-type gene and by thalidomide treatment.</text>
</comment>
<comment type="similarity">
    <text evidence="4">Belongs to the CTC1 family.</text>
</comment>
<organism>
    <name type="scientific">Danio rerio</name>
    <name type="common">Zebrafish</name>
    <name type="synonym">Brachydanio rerio</name>
    <dbReference type="NCBI Taxonomy" id="7955"/>
    <lineage>
        <taxon>Eukaryota</taxon>
        <taxon>Metazoa</taxon>
        <taxon>Chordata</taxon>
        <taxon>Craniata</taxon>
        <taxon>Vertebrata</taxon>
        <taxon>Euteleostomi</taxon>
        <taxon>Actinopterygii</taxon>
        <taxon>Neopterygii</taxon>
        <taxon>Teleostei</taxon>
        <taxon>Ostariophysi</taxon>
        <taxon>Cypriniformes</taxon>
        <taxon>Danionidae</taxon>
        <taxon>Danioninae</taxon>
        <taxon>Danio</taxon>
    </lineage>
</organism>
<gene>
    <name evidence="2" type="primary">stn1</name>
    <name type="synonym">obfc1</name>
    <name type="ORF">dkey-100g3.3</name>
    <name type="ORF">zgc:64174</name>
</gene>
<dbReference type="EMBL" id="CT737229">
    <property type="protein sequence ID" value="CAX12853.1"/>
    <property type="molecule type" value="Genomic_DNA"/>
</dbReference>
<dbReference type="EMBL" id="BC053298">
    <property type="protein sequence ID" value="AAH53298.1"/>
    <property type="molecule type" value="mRNA"/>
</dbReference>
<dbReference type="RefSeq" id="NP_956683.1">
    <property type="nucleotide sequence ID" value="NM_200389.1"/>
</dbReference>
<dbReference type="SMR" id="B8JKF4"/>
<dbReference type="FunCoup" id="B8JKF4">
    <property type="interactions" value="1789"/>
</dbReference>
<dbReference type="STRING" id="7955.ENSDARP00000013967"/>
<dbReference type="PaxDb" id="7955-ENSDARP00000013967"/>
<dbReference type="Ensembl" id="ENSDART00000027624">
    <property type="protein sequence ID" value="ENSDARP00000013967"/>
    <property type="gene ID" value="ENSDARG00000007734"/>
</dbReference>
<dbReference type="GeneID" id="393360"/>
<dbReference type="KEGG" id="dre:393360"/>
<dbReference type="AGR" id="ZFIN:ZDB-GENE-040426-1390"/>
<dbReference type="CTD" id="79991"/>
<dbReference type="ZFIN" id="ZDB-GENE-040426-1390">
    <property type="gene designation" value="stn1"/>
</dbReference>
<dbReference type="eggNOG" id="KOG3108">
    <property type="taxonomic scope" value="Eukaryota"/>
</dbReference>
<dbReference type="HOGENOM" id="CLU_063889_0_0_1"/>
<dbReference type="InParanoid" id="B8JKF4"/>
<dbReference type="OMA" id="LCWKDEK"/>
<dbReference type="OrthoDB" id="77828at2759"/>
<dbReference type="PhylomeDB" id="B8JKF4"/>
<dbReference type="TreeFam" id="TF328623"/>
<dbReference type="PRO" id="PR:B8JKF4"/>
<dbReference type="Proteomes" id="UP000000437">
    <property type="component" value="Chromosome 1"/>
</dbReference>
<dbReference type="Bgee" id="ENSDARG00000007734">
    <property type="expression patterns" value="Expressed in mature ovarian follicle and 24 other cell types or tissues"/>
</dbReference>
<dbReference type="GO" id="GO:0000781">
    <property type="term" value="C:chromosome, telomeric region"/>
    <property type="evidence" value="ECO:0000250"/>
    <property type="project" value="UniProtKB"/>
</dbReference>
<dbReference type="GO" id="GO:1990879">
    <property type="term" value="C:CST complex"/>
    <property type="evidence" value="ECO:0000318"/>
    <property type="project" value="GO_Central"/>
</dbReference>
<dbReference type="GO" id="GO:0005634">
    <property type="term" value="C:nucleus"/>
    <property type="evidence" value="ECO:0000250"/>
    <property type="project" value="UniProtKB"/>
</dbReference>
<dbReference type="GO" id="GO:0043047">
    <property type="term" value="F:single-stranded telomeric DNA binding"/>
    <property type="evidence" value="ECO:0000250"/>
    <property type="project" value="UniProtKB"/>
</dbReference>
<dbReference type="GO" id="GO:0042162">
    <property type="term" value="F:telomeric DNA binding"/>
    <property type="evidence" value="ECO:0000318"/>
    <property type="project" value="GO_Central"/>
</dbReference>
<dbReference type="GO" id="GO:0016233">
    <property type="term" value="P:telomere capping"/>
    <property type="evidence" value="ECO:0007669"/>
    <property type="project" value="InterPro"/>
</dbReference>
<dbReference type="GO" id="GO:0000723">
    <property type="term" value="P:telomere maintenance"/>
    <property type="evidence" value="ECO:0000250"/>
    <property type="project" value="UniProtKB"/>
</dbReference>
<dbReference type="GO" id="GO:0010833">
    <property type="term" value="P:telomere maintenance via telomere lengthening"/>
    <property type="evidence" value="ECO:0000250"/>
    <property type="project" value="UniProtKB"/>
</dbReference>
<dbReference type="GO" id="GO:0001944">
    <property type="term" value="P:vasculature development"/>
    <property type="evidence" value="ECO:0000315"/>
    <property type="project" value="ZFIN"/>
</dbReference>
<dbReference type="CDD" id="cd04483">
    <property type="entry name" value="hOBFC1_like"/>
    <property type="match status" value="1"/>
</dbReference>
<dbReference type="FunFam" id="1.10.10.10:FF:000275">
    <property type="entry name" value="CST complex subunit STN1"/>
    <property type="match status" value="1"/>
</dbReference>
<dbReference type="FunFam" id="2.40.50.140:FF:000181">
    <property type="entry name" value="CST complex subunit STN1"/>
    <property type="match status" value="1"/>
</dbReference>
<dbReference type="Gene3D" id="1.10.10.980">
    <property type="entry name" value="CST, Suppressor of Cdc13 homolog, complex subunit STN1, N-terminal domain"/>
    <property type="match status" value="1"/>
</dbReference>
<dbReference type="Gene3D" id="2.40.50.140">
    <property type="entry name" value="Nucleic acid-binding proteins"/>
    <property type="match status" value="1"/>
</dbReference>
<dbReference type="Gene3D" id="1.10.10.10">
    <property type="entry name" value="Winged helix-like DNA-binding domain superfamily/Winged helix DNA-binding domain"/>
    <property type="match status" value="1"/>
</dbReference>
<dbReference type="InterPro" id="IPR015253">
    <property type="entry name" value="CST_STN1_C"/>
</dbReference>
<dbReference type="InterPro" id="IPR042082">
    <property type="entry name" value="CST_Stn1_wHTH1_sf"/>
</dbReference>
<dbReference type="InterPro" id="IPR012340">
    <property type="entry name" value="NA-bd_OB-fold"/>
</dbReference>
<dbReference type="InterPro" id="IPR040260">
    <property type="entry name" value="RFA2-like"/>
</dbReference>
<dbReference type="InterPro" id="IPR014647">
    <property type="entry name" value="Stn1"/>
</dbReference>
<dbReference type="InterPro" id="IPR018856">
    <property type="entry name" value="Stn1_N"/>
</dbReference>
<dbReference type="InterPro" id="IPR036388">
    <property type="entry name" value="WH-like_DNA-bd_sf"/>
</dbReference>
<dbReference type="InterPro" id="IPR036390">
    <property type="entry name" value="WH_DNA-bd_sf"/>
</dbReference>
<dbReference type="PANTHER" id="PTHR13989:SF33">
    <property type="entry name" value="CST COMPLEX SUBUNIT STN1"/>
    <property type="match status" value="1"/>
</dbReference>
<dbReference type="PANTHER" id="PTHR13989">
    <property type="entry name" value="REPLICATION PROTEIN A-RELATED"/>
    <property type="match status" value="1"/>
</dbReference>
<dbReference type="Pfam" id="PF10451">
    <property type="entry name" value="Stn1"/>
    <property type="match status" value="1"/>
</dbReference>
<dbReference type="Pfam" id="PF09170">
    <property type="entry name" value="STN1_2"/>
    <property type="match status" value="1"/>
</dbReference>
<dbReference type="PIRSF" id="PIRSF036950">
    <property type="entry name" value="UCP036950"/>
    <property type="match status" value="1"/>
</dbReference>
<dbReference type="SUPFAM" id="SSF50249">
    <property type="entry name" value="Nucleic acid-binding proteins"/>
    <property type="match status" value="1"/>
</dbReference>
<dbReference type="SUPFAM" id="SSF46785">
    <property type="entry name" value="Winged helix' DNA-binding domain"/>
    <property type="match status" value="1"/>
</dbReference>
<reference key="1">
    <citation type="journal article" date="2013" name="Nature">
        <title>The zebrafish reference genome sequence and its relationship to the human genome.</title>
        <authorList>
            <person name="Howe K."/>
            <person name="Clark M.D."/>
            <person name="Torroja C.F."/>
            <person name="Torrance J."/>
            <person name="Berthelot C."/>
            <person name="Muffato M."/>
            <person name="Collins J.E."/>
            <person name="Humphray S."/>
            <person name="McLaren K."/>
            <person name="Matthews L."/>
            <person name="McLaren S."/>
            <person name="Sealy I."/>
            <person name="Caccamo M."/>
            <person name="Churcher C."/>
            <person name="Scott C."/>
            <person name="Barrett J.C."/>
            <person name="Koch R."/>
            <person name="Rauch G.J."/>
            <person name="White S."/>
            <person name="Chow W."/>
            <person name="Kilian B."/>
            <person name="Quintais L.T."/>
            <person name="Guerra-Assuncao J.A."/>
            <person name="Zhou Y."/>
            <person name="Gu Y."/>
            <person name="Yen J."/>
            <person name="Vogel J.H."/>
            <person name="Eyre T."/>
            <person name="Redmond S."/>
            <person name="Banerjee R."/>
            <person name="Chi J."/>
            <person name="Fu B."/>
            <person name="Langley E."/>
            <person name="Maguire S.F."/>
            <person name="Laird G.K."/>
            <person name="Lloyd D."/>
            <person name="Kenyon E."/>
            <person name="Donaldson S."/>
            <person name="Sehra H."/>
            <person name="Almeida-King J."/>
            <person name="Loveland J."/>
            <person name="Trevanion S."/>
            <person name="Jones M."/>
            <person name="Quail M."/>
            <person name="Willey D."/>
            <person name="Hunt A."/>
            <person name="Burton J."/>
            <person name="Sims S."/>
            <person name="McLay K."/>
            <person name="Plumb B."/>
            <person name="Davis J."/>
            <person name="Clee C."/>
            <person name="Oliver K."/>
            <person name="Clark R."/>
            <person name="Riddle C."/>
            <person name="Elliot D."/>
            <person name="Threadgold G."/>
            <person name="Harden G."/>
            <person name="Ware D."/>
            <person name="Begum S."/>
            <person name="Mortimore B."/>
            <person name="Kerry G."/>
            <person name="Heath P."/>
            <person name="Phillimore B."/>
            <person name="Tracey A."/>
            <person name="Corby N."/>
            <person name="Dunn M."/>
            <person name="Johnson C."/>
            <person name="Wood J."/>
            <person name="Clark S."/>
            <person name="Pelan S."/>
            <person name="Griffiths G."/>
            <person name="Smith M."/>
            <person name="Glithero R."/>
            <person name="Howden P."/>
            <person name="Barker N."/>
            <person name="Lloyd C."/>
            <person name="Stevens C."/>
            <person name="Harley J."/>
            <person name="Holt K."/>
            <person name="Panagiotidis G."/>
            <person name="Lovell J."/>
            <person name="Beasley H."/>
            <person name="Henderson C."/>
            <person name="Gordon D."/>
            <person name="Auger K."/>
            <person name="Wright D."/>
            <person name="Collins J."/>
            <person name="Raisen C."/>
            <person name="Dyer L."/>
            <person name="Leung K."/>
            <person name="Robertson L."/>
            <person name="Ambridge K."/>
            <person name="Leongamornlert D."/>
            <person name="McGuire S."/>
            <person name="Gilderthorp R."/>
            <person name="Griffiths C."/>
            <person name="Manthravadi D."/>
            <person name="Nichol S."/>
            <person name="Barker G."/>
            <person name="Whitehead S."/>
            <person name="Kay M."/>
            <person name="Brown J."/>
            <person name="Murnane C."/>
            <person name="Gray E."/>
            <person name="Humphries M."/>
            <person name="Sycamore N."/>
            <person name="Barker D."/>
            <person name="Saunders D."/>
            <person name="Wallis J."/>
            <person name="Babbage A."/>
            <person name="Hammond S."/>
            <person name="Mashreghi-Mohammadi M."/>
            <person name="Barr L."/>
            <person name="Martin S."/>
            <person name="Wray P."/>
            <person name="Ellington A."/>
            <person name="Matthews N."/>
            <person name="Ellwood M."/>
            <person name="Woodmansey R."/>
            <person name="Clark G."/>
            <person name="Cooper J."/>
            <person name="Tromans A."/>
            <person name="Grafham D."/>
            <person name="Skuce C."/>
            <person name="Pandian R."/>
            <person name="Andrews R."/>
            <person name="Harrison E."/>
            <person name="Kimberley A."/>
            <person name="Garnett J."/>
            <person name="Fosker N."/>
            <person name="Hall R."/>
            <person name="Garner P."/>
            <person name="Kelly D."/>
            <person name="Bird C."/>
            <person name="Palmer S."/>
            <person name="Gehring I."/>
            <person name="Berger A."/>
            <person name="Dooley C.M."/>
            <person name="Ersan-Urun Z."/>
            <person name="Eser C."/>
            <person name="Geiger H."/>
            <person name="Geisler M."/>
            <person name="Karotki L."/>
            <person name="Kirn A."/>
            <person name="Konantz J."/>
            <person name="Konantz M."/>
            <person name="Oberlander M."/>
            <person name="Rudolph-Geiger S."/>
            <person name="Teucke M."/>
            <person name="Lanz C."/>
            <person name="Raddatz G."/>
            <person name="Osoegawa K."/>
            <person name="Zhu B."/>
            <person name="Rapp A."/>
            <person name="Widaa S."/>
            <person name="Langford C."/>
            <person name="Yang F."/>
            <person name="Schuster S.C."/>
            <person name="Carter N.P."/>
            <person name="Harrow J."/>
            <person name="Ning Z."/>
            <person name="Herrero J."/>
            <person name="Searle S.M."/>
            <person name="Enright A."/>
            <person name="Geisler R."/>
            <person name="Plasterk R.H."/>
            <person name="Lee C."/>
            <person name="Westerfield M."/>
            <person name="de Jong P.J."/>
            <person name="Zon L.I."/>
            <person name="Postlethwait J.H."/>
            <person name="Nusslein-Volhard C."/>
            <person name="Hubbard T.J."/>
            <person name="Roest Crollius H."/>
            <person name="Rogers J."/>
            <person name="Stemple D.L."/>
        </authorList>
    </citation>
    <scope>NUCLEOTIDE SEQUENCE [LARGE SCALE GENOMIC DNA]</scope>
    <source>
        <strain>Tuebingen</strain>
    </source>
</reference>
<reference key="2">
    <citation type="submission" date="2003-06" db="EMBL/GenBank/DDBJ databases">
        <authorList>
            <consortium name="NIH - Zebrafish Gene Collection (ZGC) project"/>
        </authorList>
    </citation>
    <scope>NUCLEOTIDE SEQUENCE [LARGE SCALE MRNA]</scope>
    <source>
        <tissue>Kidney</tissue>
    </source>
</reference>
<reference key="3">
    <citation type="journal article" date="2016" name="J. Exp. Med.">
        <title>Mutations in STN1 cause Coats plus syndrome and are associated with genomic and telomere defects.</title>
        <authorList>
            <person name="Simon A.J."/>
            <person name="Lev A."/>
            <person name="Zhang Y."/>
            <person name="Weiss B."/>
            <person name="Rylova A."/>
            <person name="Eyal E."/>
            <person name="Kol N."/>
            <person name="Barel O."/>
            <person name="Cesarkas K."/>
            <person name="Soudack M."/>
            <person name="Greenberg-Kushnir N."/>
            <person name="Rhodes M."/>
            <person name="Wiest D.L."/>
            <person name="Schiby G."/>
            <person name="Barshack I."/>
            <person name="Katz S."/>
            <person name="Pras E."/>
            <person name="Poran H."/>
            <person name="Reznik-Wolf H."/>
            <person name="Ribakovsky E."/>
            <person name="Simon C."/>
            <person name="Hazou W."/>
            <person name="Sidi Y."/>
            <person name="Lahad A."/>
            <person name="Katzir H."/>
            <person name="Sagie S."/>
            <person name="Aqeilan H.A."/>
            <person name="Glousker G."/>
            <person name="Amariglio N."/>
            <person name="Tzfati Y."/>
            <person name="Selig S."/>
            <person name="Rechavi G."/>
            <person name="Somech R."/>
        </authorList>
    </citation>
    <scope>DISRUPTION PHENOTYPE</scope>
</reference>
<keyword id="KW-0158">Chromosome</keyword>
<keyword id="KW-0238">DNA-binding</keyword>
<keyword id="KW-0539">Nucleus</keyword>
<keyword id="KW-1185">Reference proteome</keyword>
<keyword id="KW-0779">Telomere</keyword>
<accession>B8JKF4</accession>
<accession>Q7T311</accession>
<feature type="chain" id="PRO_0000392989" description="CST complex subunit STN1">
    <location>
        <begin position="1"/>
        <end position="368"/>
    </location>
</feature>
<feature type="DNA-binding region" description="OB">
    <location>
        <begin position="58"/>
        <end position="162"/>
    </location>
</feature>
<feature type="region of interest" description="Interaction with CTC1" evidence="2">
    <location>
        <begin position="2"/>
        <end position="192"/>
    </location>
</feature>
<feature type="region of interest" description="Winged helix-turn-helix (wHTH) 1" evidence="1">
    <location>
        <begin position="201"/>
        <end position="295"/>
    </location>
</feature>
<feature type="region of interest" description="Winged helix-turn-helix (wHTH) 2" evidence="1">
    <location>
        <begin position="296"/>
        <end position="368"/>
    </location>
</feature>
<feature type="sequence conflict" description="In Ref. 2; AAH53298." evidence="4" ref="2">
    <original>R</original>
    <variation>L</variation>
    <location>
        <position position="128"/>
    </location>
</feature>
<feature type="sequence conflict" description="In Ref. 2; AAH53298." evidence="4" ref="2">
    <original>S</original>
    <variation>C</variation>
    <location>
        <position position="198"/>
    </location>
</feature>
<sequence>MAVSLGDDDADELPSMLWGLDPVFSSYCRLYITDILLMKESRQVPGIYFYKTHPIFQVDVLGIVVYKREREDFYCYGVDDSTGVINCLCWKDEKWRDQGGSTTCGDASGFPRSFNIEDELKGLKEAERKSTVLEIGDLLRVRGTVKTSRDNREIKATSFYKVHDPAMAVQISRMLELPQLYRKCYDQPFKMPSDDLGSTEAGGSSHPQYLLSRAVLTLKEFLLEKEVTRFRPYDVEFLLHPLIQRSSAEQEADQPGTSFATQVGKLLKETLSFLQDEGQIFRKKRTQDEVYNVTEQDKDLHIAIKDVLREDTKREKYAEKGCHVLHILSSVRQRYSQNLSREVLEVALTFLESNSDIISTTEAHYIVL</sequence>
<evidence type="ECO:0000250" key="1"/>
<evidence type="ECO:0000250" key="2">
    <source>
        <dbReference type="UniProtKB" id="Q9H668"/>
    </source>
</evidence>
<evidence type="ECO:0000269" key="3">
    <source>
    </source>
</evidence>
<evidence type="ECO:0000305" key="4"/>
<name>STN1_DANRE</name>